<accession>A9AB23</accession>
<keyword id="KW-0963">Cytoplasm</keyword>
<keyword id="KW-0255">Endonuclease</keyword>
<keyword id="KW-0378">Hydrolase</keyword>
<keyword id="KW-0479">Metal-binding</keyword>
<keyword id="KW-0540">Nuclease</keyword>
<keyword id="KW-0819">tRNA processing</keyword>
<keyword id="KW-0862">Zinc</keyword>
<reference key="1">
    <citation type="submission" date="2007-10" db="EMBL/GenBank/DDBJ databases">
        <title>Complete sequence of Methanococcus maripaludis C6.</title>
        <authorList>
            <consortium name="US DOE Joint Genome Institute"/>
            <person name="Copeland A."/>
            <person name="Lucas S."/>
            <person name="Lapidus A."/>
            <person name="Barry K."/>
            <person name="Glavina del Rio T."/>
            <person name="Dalin E."/>
            <person name="Tice H."/>
            <person name="Pitluck S."/>
            <person name="Clum A."/>
            <person name="Schmutz J."/>
            <person name="Larimer F."/>
            <person name="Land M."/>
            <person name="Hauser L."/>
            <person name="Kyrpides N."/>
            <person name="Mikhailova N."/>
            <person name="Sieprawska-Lupa M."/>
            <person name="Whitman W.B."/>
            <person name="Richardson P."/>
        </authorList>
    </citation>
    <scope>NUCLEOTIDE SEQUENCE [LARGE SCALE GENOMIC DNA]</scope>
    <source>
        <strain>C6 / ATCC BAA-1332</strain>
    </source>
</reference>
<feature type="chain" id="PRO_1000194595" description="Ribonuclease P protein component 4">
    <location>
        <begin position="1"/>
        <end position="110"/>
    </location>
</feature>
<feature type="binding site" evidence="1">
    <location>
        <position position="65"/>
    </location>
    <ligand>
        <name>Zn(2+)</name>
        <dbReference type="ChEBI" id="CHEBI:29105"/>
    </ligand>
</feature>
<feature type="binding site" evidence="1">
    <location>
        <position position="68"/>
    </location>
    <ligand>
        <name>Zn(2+)</name>
        <dbReference type="ChEBI" id="CHEBI:29105"/>
    </ligand>
</feature>
<feature type="binding site" evidence="1">
    <location>
        <position position="94"/>
    </location>
    <ligand>
        <name>Zn(2+)</name>
        <dbReference type="ChEBI" id="CHEBI:29105"/>
    </ligand>
</feature>
<feature type="binding site" evidence="1">
    <location>
        <position position="97"/>
    </location>
    <ligand>
        <name>Zn(2+)</name>
        <dbReference type="ChEBI" id="CHEBI:29105"/>
    </ligand>
</feature>
<sequence length="110" mass="12948">MKLKKKFLEKSKKIAEERIDVLMNLAEKESKDGKADRSKNYVLLGKKIAMRMRMPYPKEWKRRICKNCGSFLIYGKNARVRTKAKNYPHVVITCLECNSITRIPIKTEKK</sequence>
<proteinExistence type="inferred from homology"/>
<dbReference type="EC" id="3.1.26.5" evidence="1"/>
<dbReference type="EMBL" id="CP000867">
    <property type="protein sequence ID" value="ABX02546.1"/>
    <property type="molecule type" value="Genomic_DNA"/>
</dbReference>
<dbReference type="SMR" id="A9AB23"/>
<dbReference type="STRING" id="444158.MmarC6_1734"/>
<dbReference type="KEGG" id="mmx:MmarC6_1734"/>
<dbReference type="eggNOG" id="arCOG04345">
    <property type="taxonomic scope" value="Archaea"/>
</dbReference>
<dbReference type="HOGENOM" id="CLU_079140_3_1_2"/>
<dbReference type="OrthoDB" id="10058at2157"/>
<dbReference type="PhylomeDB" id="A9AB23"/>
<dbReference type="GO" id="GO:0005737">
    <property type="term" value="C:cytoplasm"/>
    <property type="evidence" value="ECO:0007669"/>
    <property type="project" value="UniProtKB-SubCell"/>
</dbReference>
<dbReference type="GO" id="GO:0030677">
    <property type="term" value="C:ribonuclease P complex"/>
    <property type="evidence" value="ECO:0007669"/>
    <property type="project" value="UniProtKB-UniRule"/>
</dbReference>
<dbReference type="GO" id="GO:0004526">
    <property type="term" value="F:ribonuclease P activity"/>
    <property type="evidence" value="ECO:0007669"/>
    <property type="project" value="UniProtKB-UniRule"/>
</dbReference>
<dbReference type="GO" id="GO:0008270">
    <property type="term" value="F:zinc ion binding"/>
    <property type="evidence" value="ECO:0007669"/>
    <property type="project" value="UniProtKB-UniRule"/>
</dbReference>
<dbReference type="GO" id="GO:0001682">
    <property type="term" value="P:tRNA 5'-leader removal"/>
    <property type="evidence" value="ECO:0007669"/>
    <property type="project" value="UniProtKB-UniRule"/>
</dbReference>
<dbReference type="Gene3D" id="6.20.50.20">
    <property type="match status" value="1"/>
</dbReference>
<dbReference type="Gene3D" id="1.20.5.420">
    <property type="entry name" value="Immunoglobulin FC, subunit C"/>
    <property type="match status" value="1"/>
</dbReference>
<dbReference type="HAMAP" id="MF_00757">
    <property type="entry name" value="RNase_P_4"/>
    <property type="match status" value="1"/>
</dbReference>
<dbReference type="InterPro" id="IPR016432">
    <property type="entry name" value="RNP4"/>
</dbReference>
<dbReference type="InterPro" id="IPR007175">
    <property type="entry name" value="Rpr2/Snm1/Rpp21"/>
</dbReference>
<dbReference type="PANTHER" id="PTHR14742:SF0">
    <property type="entry name" value="RIBONUCLEASE P PROTEIN SUBUNIT P21"/>
    <property type="match status" value="1"/>
</dbReference>
<dbReference type="PANTHER" id="PTHR14742">
    <property type="entry name" value="RIBONUCLEASE P SUBUNIT P21"/>
    <property type="match status" value="1"/>
</dbReference>
<dbReference type="Pfam" id="PF04032">
    <property type="entry name" value="Rpr2"/>
    <property type="match status" value="1"/>
</dbReference>
<dbReference type="PIRSF" id="PIRSF004878">
    <property type="entry name" value="RNase_P_4"/>
    <property type="match status" value="1"/>
</dbReference>
<gene>
    <name evidence="1" type="primary">rnp4</name>
    <name type="ordered locus">MmarC6_1734</name>
</gene>
<comment type="function">
    <text evidence="1">Part of ribonuclease P, a protein complex that generates mature tRNA molecules by cleaving their 5'-ends.</text>
</comment>
<comment type="catalytic activity">
    <reaction evidence="1">
        <text>Endonucleolytic cleavage of RNA, removing 5'-extranucleotides from tRNA precursor.</text>
        <dbReference type="EC" id="3.1.26.5"/>
    </reaction>
</comment>
<comment type="cofactor">
    <cofactor evidence="1">
        <name>Zn(2+)</name>
        <dbReference type="ChEBI" id="CHEBI:29105"/>
    </cofactor>
    <text evidence="1">Binds 1 zinc ion per subunit.</text>
</comment>
<comment type="subunit">
    <text evidence="1">Consists of a catalytic RNA component and at least 4-5 protein subunits.</text>
</comment>
<comment type="subcellular location">
    <subcellularLocation>
        <location evidence="1">Cytoplasm</location>
    </subcellularLocation>
</comment>
<comment type="similarity">
    <text evidence="1">Belongs to the eukaryotic/archaeal RNase P protein component 4 family.</text>
</comment>
<evidence type="ECO:0000255" key="1">
    <source>
        <dbReference type="HAMAP-Rule" id="MF_00757"/>
    </source>
</evidence>
<organism>
    <name type="scientific">Methanococcus maripaludis (strain C6 / ATCC BAA-1332)</name>
    <dbReference type="NCBI Taxonomy" id="444158"/>
    <lineage>
        <taxon>Archaea</taxon>
        <taxon>Methanobacteriati</taxon>
        <taxon>Methanobacteriota</taxon>
        <taxon>Methanomada group</taxon>
        <taxon>Methanococci</taxon>
        <taxon>Methanococcales</taxon>
        <taxon>Methanococcaceae</taxon>
        <taxon>Methanococcus</taxon>
    </lineage>
</organism>
<protein>
    <recommendedName>
        <fullName evidence="1">Ribonuclease P protein component 4</fullName>
        <shortName evidence="1">RNase P component 4</shortName>
        <ecNumber evidence="1">3.1.26.5</ecNumber>
    </recommendedName>
    <alternativeName>
        <fullName evidence="1">Rpp21</fullName>
    </alternativeName>
</protein>
<name>RNP4_METM6</name>